<feature type="chain" id="PRO_0000172455" description="Large ribosomal subunit protein bL32c">
    <location>
        <begin position="1"/>
        <end position="58"/>
    </location>
</feature>
<feature type="region of interest" description="Disordered" evidence="2">
    <location>
        <begin position="1"/>
        <end position="21"/>
    </location>
</feature>
<feature type="region of interest" description="Disordered" evidence="2">
    <location>
        <begin position="34"/>
        <end position="58"/>
    </location>
</feature>
<feature type="compositionally biased region" description="Low complexity" evidence="2">
    <location>
        <begin position="44"/>
        <end position="58"/>
    </location>
</feature>
<sequence>MAVPKKRTPKSKTRSRKSQWMRKALKQLQKARTLAGRLAARQDQMQPTQMQPTQMQPN</sequence>
<name>RK32_CYAM1</name>
<accession>Q85G60</accession>
<evidence type="ECO:0000255" key="1">
    <source>
        <dbReference type="HAMAP-Rule" id="MF_00340"/>
    </source>
</evidence>
<evidence type="ECO:0000256" key="2">
    <source>
        <dbReference type="SAM" id="MobiDB-lite"/>
    </source>
</evidence>
<evidence type="ECO:0000305" key="3"/>
<keyword id="KW-0150">Chloroplast</keyword>
<keyword id="KW-0934">Plastid</keyword>
<keyword id="KW-1185">Reference proteome</keyword>
<keyword id="KW-0687">Ribonucleoprotein</keyword>
<keyword id="KW-0689">Ribosomal protein</keyword>
<dbReference type="EMBL" id="AB002583">
    <property type="protein sequence ID" value="BAC76131.1"/>
    <property type="molecule type" value="Genomic_DNA"/>
</dbReference>
<dbReference type="RefSeq" id="NP_848969.1">
    <property type="nucleotide sequence ID" value="NC_004799.1"/>
</dbReference>
<dbReference type="SMR" id="Q85G60"/>
<dbReference type="EnsemblPlants" id="CMV046CT">
    <property type="protein sequence ID" value="CMV046CT"/>
    <property type="gene ID" value="CMV046C"/>
</dbReference>
<dbReference type="GeneID" id="844986"/>
<dbReference type="Gramene" id="CMV046CT">
    <property type="protein sequence ID" value="CMV046CT"/>
    <property type="gene ID" value="CMV046C"/>
</dbReference>
<dbReference type="KEGG" id="cme:CymeCp037"/>
<dbReference type="HOGENOM" id="CLU_2981902_0_0_1"/>
<dbReference type="Proteomes" id="UP000007014">
    <property type="component" value="Chloroplast"/>
</dbReference>
<dbReference type="GO" id="GO:0009507">
    <property type="term" value="C:chloroplast"/>
    <property type="evidence" value="ECO:0007669"/>
    <property type="project" value="UniProtKB-SubCell"/>
</dbReference>
<dbReference type="GO" id="GO:0015934">
    <property type="term" value="C:large ribosomal subunit"/>
    <property type="evidence" value="ECO:0007669"/>
    <property type="project" value="InterPro"/>
</dbReference>
<dbReference type="GO" id="GO:0003735">
    <property type="term" value="F:structural constituent of ribosome"/>
    <property type="evidence" value="ECO:0007669"/>
    <property type="project" value="InterPro"/>
</dbReference>
<dbReference type="GO" id="GO:0006412">
    <property type="term" value="P:translation"/>
    <property type="evidence" value="ECO:0007669"/>
    <property type="project" value="UniProtKB-UniRule"/>
</dbReference>
<dbReference type="HAMAP" id="MF_00340">
    <property type="entry name" value="Ribosomal_bL32"/>
    <property type="match status" value="1"/>
</dbReference>
<dbReference type="InterPro" id="IPR002677">
    <property type="entry name" value="Ribosomal_bL32"/>
</dbReference>
<dbReference type="Pfam" id="PF01783">
    <property type="entry name" value="Ribosomal_L32p"/>
    <property type="match status" value="1"/>
</dbReference>
<proteinExistence type="inferred from homology"/>
<organism>
    <name type="scientific">Cyanidioschyzon merolae (strain NIES-3377 / 10D)</name>
    <name type="common">Unicellular red alga</name>
    <dbReference type="NCBI Taxonomy" id="280699"/>
    <lineage>
        <taxon>Eukaryota</taxon>
        <taxon>Rhodophyta</taxon>
        <taxon>Bangiophyceae</taxon>
        <taxon>Cyanidiales</taxon>
        <taxon>Cyanidiaceae</taxon>
        <taxon>Cyanidioschyzon</taxon>
    </lineage>
</organism>
<geneLocation type="chloroplast"/>
<protein>
    <recommendedName>
        <fullName evidence="1">Large ribosomal subunit protein bL32c</fullName>
    </recommendedName>
    <alternativeName>
        <fullName evidence="3">50S ribosomal protein L32, chloroplastic</fullName>
    </alternativeName>
</protein>
<gene>
    <name evidence="1" type="primary">rpl32</name>
</gene>
<comment type="subcellular location">
    <subcellularLocation>
        <location>Plastid</location>
        <location>Chloroplast</location>
    </subcellularLocation>
</comment>
<comment type="similarity">
    <text evidence="1">Belongs to the bacterial ribosomal protein bL32 family.</text>
</comment>
<reference key="1">
    <citation type="journal article" date="2003" name="DNA Res.">
        <title>Complete sequence and analysis of the plastid genome of the unicellular red alga Cyanidioschyzon merolae.</title>
        <authorList>
            <person name="Ohta N."/>
            <person name="Matsuzaki M."/>
            <person name="Misumi O."/>
            <person name="Miyagishima S.-Y."/>
            <person name="Nozaki H."/>
            <person name="Tanaka K."/>
            <person name="Shin-i T."/>
            <person name="Kohara Y."/>
            <person name="Kuroiwa T."/>
        </authorList>
    </citation>
    <scope>NUCLEOTIDE SEQUENCE [LARGE SCALE GENOMIC DNA]</scope>
    <source>
        <strain>NIES-3377 / 10D</strain>
    </source>
</reference>